<proteinExistence type="inferred from homology"/>
<organism>
    <name type="scientific">Lactococcus lactis subsp. lactis (strain IL1403)</name>
    <name type="common">Streptococcus lactis</name>
    <dbReference type="NCBI Taxonomy" id="272623"/>
    <lineage>
        <taxon>Bacteria</taxon>
        <taxon>Bacillati</taxon>
        <taxon>Bacillota</taxon>
        <taxon>Bacilli</taxon>
        <taxon>Lactobacillales</taxon>
        <taxon>Streptococcaceae</taxon>
        <taxon>Lactococcus</taxon>
    </lineage>
</organism>
<comment type="function">
    <text evidence="1">Cell division protein that may be involved in stabilizing or promoting the assembly of the division complex.</text>
</comment>
<comment type="subcellular location">
    <subcellularLocation>
        <location evidence="1">Cell membrane</location>
        <topology evidence="1">Single-pass type II membrane protein</topology>
    </subcellularLocation>
    <text evidence="1">Localizes to the division septum.</text>
</comment>
<comment type="similarity">
    <text evidence="1">Belongs to the FtsQ/DivIB family. DivIB subfamily.</text>
</comment>
<protein>
    <recommendedName>
        <fullName evidence="1">Cell division protein DivIB</fullName>
    </recommendedName>
</protein>
<evidence type="ECO:0000255" key="1">
    <source>
        <dbReference type="HAMAP-Rule" id="MF_00912"/>
    </source>
</evidence>
<evidence type="ECO:0000255" key="2">
    <source>
        <dbReference type="PROSITE-ProRule" id="PRU01115"/>
    </source>
</evidence>
<evidence type="ECO:0000256" key="3">
    <source>
        <dbReference type="SAM" id="MobiDB-lite"/>
    </source>
</evidence>
<dbReference type="EMBL" id="AE005176">
    <property type="protein sequence ID" value="AAK05686.1"/>
    <property type="molecule type" value="Genomic_DNA"/>
</dbReference>
<dbReference type="PIR" id="D86823">
    <property type="entry name" value="D86823"/>
</dbReference>
<dbReference type="RefSeq" id="NP_267744.1">
    <property type="nucleotide sequence ID" value="NC_002662.1"/>
</dbReference>
<dbReference type="RefSeq" id="WP_003130744.1">
    <property type="nucleotide sequence ID" value="NC_002662.1"/>
</dbReference>
<dbReference type="PaxDb" id="272623-L0209"/>
<dbReference type="EnsemblBacteria" id="AAK05686">
    <property type="protein sequence ID" value="AAK05686"/>
    <property type="gene ID" value="L0209"/>
</dbReference>
<dbReference type="KEGG" id="lla:L0209"/>
<dbReference type="PATRIC" id="fig|272623.7.peg.1708"/>
<dbReference type="eggNOG" id="COG1589">
    <property type="taxonomic scope" value="Bacteria"/>
</dbReference>
<dbReference type="HOGENOM" id="CLU_046278_1_1_9"/>
<dbReference type="OrthoDB" id="1819027at2"/>
<dbReference type="Proteomes" id="UP000002196">
    <property type="component" value="Chromosome"/>
</dbReference>
<dbReference type="GO" id="GO:0032153">
    <property type="term" value="C:cell division site"/>
    <property type="evidence" value="ECO:0007669"/>
    <property type="project" value="UniProtKB-UniRule"/>
</dbReference>
<dbReference type="GO" id="GO:0005886">
    <property type="term" value="C:plasma membrane"/>
    <property type="evidence" value="ECO:0007669"/>
    <property type="project" value="UniProtKB-SubCell"/>
</dbReference>
<dbReference type="GO" id="GO:0043093">
    <property type="term" value="P:FtsZ-dependent cytokinesis"/>
    <property type="evidence" value="ECO:0007669"/>
    <property type="project" value="UniProtKB-UniRule"/>
</dbReference>
<dbReference type="Gene3D" id="3.40.50.10960">
    <property type="match status" value="1"/>
</dbReference>
<dbReference type="HAMAP" id="MF_00912">
    <property type="entry name" value="DivIB"/>
    <property type="match status" value="1"/>
</dbReference>
<dbReference type="InterPro" id="IPR005548">
    <property type="entry name" value="Cell_div_FtsQ/DivIB_C"/>
</dbReference>
<dbReference type="InterPro" id="IPR026580">
    <property type="entry name" value="DivIB"/>
</dbReference>
<dbReference type="InterPro" id="IPR050487">
    <property type="entry name" value="FtsQ_DivIB"/>
</dbReference>
<dbReference type="InterPro" id="IPR034746">
    <property type="entry name" value="POTRA"/>
</dbReference>
<dbReference type="InterPro" id="IPR013685">
    <property type="entry name" value="POTRA_FtsQ_type"/>
</dbReference>
<dbReference type="PANTHER" id="PTHR37820">
    <property type="entry name" value="CELL DIVISION PROTEIN DIVIB"/>
    <property type="match status" value="1"/>
</dbReference>
<dbReference type="PANTHER" id="PTHR37820:SF1">
    <property type="entry name" value="CELL DIVISION PROTEIN FTSQ"/>
    <property type="match status" value="1"/>
</dbReference>
<dbReference type="Pfam" id="PF03799">
    <property type="entry name" value="FtsQ_DivIB_C"/>
    <property type="match status" value="1"/>
</dbReference>
<dbReference type="Pfam" id="PF08478">
    <property type="entry name" value="POTRA_1"/>
    <property type="match status" value="1"/>
</dbReference>
<dbReference type="PROSITE" id="PS51779">
    <property type="entry name" value="POTRA"/>
    <property type="match status" value="1"/>
</dbReference>
<sequence length="392" mass="44012">MSEKDNNLTPWQQKHLEYQKRKAEEAKKEKKANQPKKVHFSSPFLKSLPKTEKNFDDTRDEAESAELLEEGFETNNEETQSSEAPIENEKIIAQLEQLSQENEYEYEEEQIKRPSRFFSLFKGSAPLLKKMWPALAIVVLVFVGSLYLISPLSKISTFSVSGNANESSEQVALASGIQTSDSIFNILNNKEKIEATIEQKFPRISAVTINYHFPNRFEAIVKEHTNSVYVKRNDQTYLVLNNGYVITTPVDATKLEKLPVLQNFNDEEVKTFVNAYETLKPAIKSLMTNVTKTPTDATKDFIAIDMSDGNQVRVSLSQLADRLPYYPSVAKQVQAPQVVDMEAGIYTKPKAAYDAYLSQLSTSKSASISAQNAKKTDASSENTAQSTTTSSN</sequence>
<feature type="chain" id="PRO_0000414776" description="Cell division protein DivIB">
    <location>
        <begin position="1"/>
        <end position="392"/>
    </location>
</feature>
<feature type="topological domain" description="Cytoplasmic" evidence="1">
    <location>
        <begin position="1"/>
        <end position="131"/>
    </location>
</feature>
<feature type="transmembrane region" description="Helical" evidence="1">
    <location>
        <begin position="132"/>
        <end position="152"/>
    </location>
</feature>
<feature type="topological domain" description="Extracellular" evidence="1">
    <location>
        <begin position="153"/>
        <end position="392"/>
    </location>
</feature>
<feature type="domain" description="POTRA" evidence="2">
    <location>
        <begin position="153"/>
        <end position="224"/>
    </location>
</feature>
<feature type="region of interest" description="Disordered" evidence="3">
    <location>
        <begin position="1"/>
        <end position="87"/>
    </location>
</feature>
<feature type="region of interest" description="Disordered" evidence="3">
    <location>
        <begin position="368"/>
        <end position="392"/>
    </location>
</feature>
<feature type="compositionally biased region" description="Basic and acidic residues" evidence="3">
    <location>
        <begin position="14"/>
        <end position="32"/>
    </location>
</feature>
<feature type="compositionally biased region" description="Acidic residues" evidence="3">
    <location>
        <begin position="58"/>
        <end position="76"/>
    </location>
</feature>
<keyword id="KW-0131">Cell cycle</keyword>
<keyword id="KW-0132">Cell division</keyword>
<keyword id="KW-1003">Cell membrane</keyword>
<keyword id="KW-0472">Membrane</keyword>
<keyword id="KW-1185">Reference proteome</keyword>
<keyword id="KW-0812">Transmembrane</keyword>
<keyword id="KW-1133">Transmembrane helix</keyword>
<name>DIVIB_LACLA</name>
<gene>
    <name evidence="1" type="primary">divIB</name>
    <name type="synonym">ftsQ</name>
    <name type="ordered locus">LL1588</name>
    <name type="ORF">L0209</name>
</gene>
<reference key="1">
    <citation type="journal article" date="2001" name="Genome Res.">
        <title>The complete genome sequence of the lactic acid bacterium Lactococcus lactis ssp. lactis IL1403.</title>
        <authorList>
            <person name="Bolotin A."/>
            <person name="Wincker P."/>
            <person name="Mauger S."/>
            <person name="Jaillon O."/>
            <person name="Malarme K."/>
            <person name="Weissenbach J."/>
            <person name="Ehrlich S.D."/>
            <person name="Sorokin A."/>
        </authorList>
    </citation>
    <scope>NUCLEOTIDE SEQUENCE [LARGE SCALE GENOMIC DNA]</scope>
    <source>
        <strain>IL1403</strain>
    </source>
</reference>
<accession>Q9CF93</accession>